<organism>
    <name type="scientific">Yersinia pestis (strain Pestoides F)</name>
    <dbReference type="NCBI Taxonomy" id="386656"/>
    <lineage>
        <taxon>Bacteria</taxon>
        <taxon>Pseudomonadati</taxon>
        <taxon>Pseudomonadota</taxon>
        <taxon>Gammaproteobacteria</taxon>
        <taxon>Enterobacterales</taxon>
        <taxon>Yersiniaceae</taxon>
        <taxon>Yersinia</taxon>
    </lineage>
</organism>
<sequence length="443" mass="50912">METLASLYNEHLSTLQQRTRDVLERHQLDALLIHSGELQRLFLDDRDYPFKVNPQFKAWVPVTEVPNCWLWVDGVNTPKLWFYSPVDYWHSVEPLPDSFWTKNIDVQPLLNADDIAQQLPVQRERVAYIGYAQQRAQALGFSAENINPQPVLDYLHYYRSYKTDYELACMREAQKTAVVGHRAAYEAFQSGMSEFDINLAYLMATGHRDTDVPYDNIVALNEHSAVLHYTILQHQPPAEIRSFLIDAGAEYNGYAADLTRTYTADRDSDFAALISDLNTEQLALIDTIKSGERYTDYHVQMHQRIAKLLRTHNLVTGISEEAMVEQGITCPFLPHGLGHPLGLQVHDTAGFMQDDKGTNLNAPSKYPYLRCTRVLQPRMVLTIEPGLYFIDSLLAPWRIGEFSKHFNWDRIDALKPYGGIRIEDNIVIHDKRVENMTRDLKLA</sequence>
<evidence type="ECO:0000255" key="1">
    <source>
        <dbReference type="HAMAP-Rule" id="MF_01279"/>
    </source>
</evidence>
<accession>A4TR26</accession>
<dbReference type="EC" id="3.4.13.9" evidence="1"/>
<dbReference type="EMBL" id="CP000668">
    <property type="protein sequence ID" value="ABP41738.1"/>
    <property type="molecule type" value="Genomic_DNA"/>
</dbReference>
<dbReference type="PIR" id="AE0458">
    <property type="entry name" value="AE0458"/>
</dbReference>
<dbReference type="RefSeq" id="WP_002211547.1">
    <property type="nucleotide sequence ID" value="NZ_CP009715.1"/>
</dbReference>
<dbReference type="SMR" id="A4TR26"/>
<dbReference type="MEROPS" id="M24.003"/>
<dbReference type="GeneID" id="57974943"/>
<dbReference type="KEGG" id="ypp:YPDSF_3385"/>
<dbReference type="PATRIC" id="fig|386656.14.peg.943"/>
<dbReference type="GO" id="GO:0005829">
    <property type="term" value="C:cytosol"/>
    <property type="evidence" value="ECO:0007669"/>
    <property type="project" value="TreeGrafter"/>
</dbReference>
<dbReference type="GO" id="GO:0004177">
    <property type="term" value="F:aminopeptidase activity"/>
    <property type="evidence" value="ECO:0007669"/>
    <property type="project" value="TreeGrafter"/>
</dbReference>
<dbReference type="GO" id="GO:0046872">
    <property type="term" value="F:metal ion binding"/>
    <property type="evidence" value="ECO:0007669"/>
    <property type="project" value="UniProtKB-KW"/>
</dbReference>
<dbReference type="GO" id="GO:0008235">
    <property type="term" value="F:metalloexopeptidase activity"/>
    <property type="evidence" value="ECO:0007669"/>
    <property type="project" value="UniProtKB-UniRule"/>
</dbReference>
<dbReference type="GO" id="GO:0016795">
    <property type="term" value="F:phosphoric triester hydrolase activity"/>
    <property type="evidence" value="ECO:0007669"/>
    <property type="project" value="InterPro"/>
</dbReference>
<dbReference type="GO" id="GO:0102009">
    <property type="term" value="F:proline dipeptidase activity"/>
    <property type="evidence" value="ECO:0007669"/>
    <property type="project" value="UniProtKB-EC"/>
</dbReference>
<dbReference type="GO" id="GO:0006508">
    <property type="term" value="P:proteolysis"/>
    <property type="evidence" value="ECO:0007669"/>
    <property type="project" value="UniProtKB-KW"/>
</dbReference>
<dbReference type="Gene3D" id="3.90.230.10">
    <property type="entry name" value="Creatinase/methionine aminopeptidase superfamily"/>
    <property type="match status" value="1"/>
</dbReference>
<dbReference type="Gene3D" id="3.40.350.10">
    <property type="entry name" value="Creatinase/prolidase N-terminal domain"/>
    <property type="match status" value="1"/>
</dbReference>
<dbReference type="HAMAP" id="MF_01279">
    <property type="entry name" value="X_Pro_dipeptid"/>
    <property type="match status" value="1"/>
</dbReference>
<dbReference type="InterPro" id="IPR029149">
    <property type="entry name" value="Creatin/AminoP/Spt16_N"/>
</dbReference>
<dbReference type="InterPro" id="IPR036005">
    <property type="entry name" value="Creatinase/aminopeptidase-like"/>
</dbReference>
<dbReference type="InterPro" id="IPR048819">
    <property type="entry name" value="PepQ_N"/>
</dbReference>
<dbReference type="InterPro" id="IPR000994">
    <property type="entry name" value="Pept_M24"/>
</dbReference>
<dbReference type="InterPro" id="IPR001131">
    <property type="entry name" value="Peptidase_M24B_aminopep-P_CS"/>
</dbReference>
<dbReference type="InterPro" id="IPR052433">
    <property type="entry name" value="X-Pro_dipept-like"/>
</dbReference>
<dbReference type="InterPro" id="IPR022846">
    <property type="entry name" value="X_Pro_dipept"/>
</dbReference>
<dbReference type="NCBIfam" id="NF010133">
    <property type="entry name" value="PRK13607.1"/>
    <property type="match status" value="1"/>
</dbReference>
<dbReference type="PANTHER" id="PTHR43226">
    <property type="entry name" value="XAA-PRO AMINOPEPTIDASE 3"/>
    <property type="match status" value="1"/>
</dbReference>
<dbReference type="PANTHER" id="PTHR43226:SF8">
    <property type="entry name" value="XAA-PRO DIPEPTIDASE"/>
    <property type="match status" value="1"/>
</dbReference>
<dbReference type="Pfam" id="PF21216">
    <property type="entry name" value="PepQ_N"/>
    <property type="match status" value="1"/>
</dbReference>
<dbReference type="Pfam" id="PF00557">
    <property type="entry name" value="Peptidase_M24"/>
    <property type="match status" value="1"/>
</dbReference>
<dbReference type="SUPFAM" id="SSF55920">
    <property type="entry name" value="Creatinase/aminopeptidase"/>
    <property type="match status" value="1"/>
</dbReference>
<dbReference type="PROSITE" id="PS00491">
    <property type="entry name" value="PROLINE_PEPTIDASE"/>
    <property type="match status" value="1"/>
</dbReference>
<feature type="chain" id="PRO_0000303882" description="Xaa-Pro dipeptidase">
    <location>
        <begin position="1"/>
        <end position="443"/>
    </location>
</feature>
<feature type="binding site" evidence="1">
    <location>
        <position position="246"/>
    </location>
    <ligand>
        <name>Mn(2+)</name>
        <dbReference type="ChEBI" id="CHEBI:29035"/>
        <label>2</label>
    </ligand>
</feature>
<feature type="binding site" evidence="1">
    <location>
        <position position="257"/>
    </location>
    <ligand>
        <name>Mn(2+)</name>
        <dbReference type="ChEBI" id="CHEBI:29035"/>
        <label>1</label>
    </ligand>
</feature>
<feature type="binding site" evidence="1">
    <location>
        <position position="257"/>
    </location>
    <ligand>
        <name>Mn(2+)</name>
        <dbReference type="ChEBI" id="CHEBI:29035"/>
        <label>2</label>
    </ligand>
</feature>
<feature type="binding site" evidence="1">
    <location>
        <position position="339"/>
    </location>
    <ligand>
        <name>Mn(2+)</name>
        <dbReference type="ChEBI" id="CHEBI:29035"/>
        <label>1</label>
    </ligand>
</feature>
<feature type="binding site" evidence="1">
    <location>
        <position position="384"/>
    </location>
    <ligand>
        <name>Mn(2+)</name>
        <dbReference type="ChEBI" id="CHEBI:29035"/>
        <label>1</label>
    </ligand>
</feature>
<feature type="binding site" evidence="1">
    <location>
        <position position="423"/>
    </location>
    <ligand>
        <name>Mn(2+)</name>
        <dbReference type="ChEBI" id="CHEBI:29035"/>
        <label>1</label>
    </ligand>
</feature>
<feature type="binding site" evidence="1">
    <location>
        <position position="423"/>
    </location>
    <ligand>
        <name>Mn(2+)</name>
        <dbReference type="ChEBI" id="CHEBI:29035"/>
        <label>2</label>
    </ligand>
</feature>
<keyword id="KW-0224">Dipeptidase</keyword>
<keyword id="KW-0378">Hydrolase</keyword>
<keyword id="KW-0464">Manganese</keyword>
<keyword id="KW-0479">Metal-binding</keyword>
<keyword id="KW-0482">Metalloprotease</keyword>
<keyword id="KW-0645">Protease</keyword>
<name>PEPQ_YERPP</name>
<reference key="1">
    <citation type="submission" date="2007-02" db="EMBL/GenBank/DDBJ databases">
        <title>Complete sequence of chromosome of Yersinia pestis Pestoides F.</title>
        <authorList>
            <consortium name="US DOE Joint Genome Institute"/>
            <person name="Copeland A."/>
            <person name="Lucas S."/>
            <person name="Lapidus A."/>
            <person name="Barry K."/>
            <person name="Detter J.C."/>
            <person name="Glavina del Rio T."/>
            <person name="Hammon N."/>
            <person name="Israni S."/>
            <person name="Dalin E."/>
            <person name="Tice H."/>
            <person name="Pitluck S."/>
            <person name="Di Bartolo G."/>
            <person name="Chain P."/>
            <person name="Malfatti S."/>
            <person name="Shin M."/>
            <person name="Vergez L."/>
            <person name="Schmutz J."/>
            <person name="Larimer F."/>
            <person name="Land M."/>
            <person name="Hauser L."/>
            <person name="Worsham P."/>
            <person name="Chu M."/>
            <person name="Bearden S."/>
            <person name="Garcia E."/>
            <person name="Richardson P."/>
        </authorList>
    </citation>
    <scope>NUCLEOTIDE SEQUENCE [LARGE SCALE GENOMIC DNA]</scope>
    <source>
        <strain>Pestoides F</strain>
    </source>
</reference>
<comment type="function">
    <text evidence="1">Splits dipeptides with a prolyl residue in the C-terminal position.</text>
</comment>
<comment type="catalytic activity">
    <reaction evidence="1">
        <text>Xaa-L-Pro dipeptide + H2O = an L-alpha-amino acid + L-proline</text>
        <dbReference type="Rhea" id="RHEA:76407"/>
        <dbReference type="ChEBI" id="CHEBI:15377"/>
        <dbReference type="ChEBI" id="CHEBI:59869"/>
        <dbReference type="ChEBI" id="CHEBI:60039"/>
        <dbReference type="ChEBI" id="CHEBI:195196"/>
        <dbReference type="EC" id="3.4.13.9"/>
    </reaction>
</comment>
<comment type="cofactor">
    <cofactor evidence="1">
        <name>Mn(2+)</name>
        <dbReference type="ChEBI" id="CHEBI:29035"/>
    </cofactor>
    <text evidence="1">Binds 2 manganese ions per subunit.</text>
</comment>
<comment type="similarity">
    <text evidence="1">Belongs to the peptidase M24B family. Bacterial-type prolidase subfamily.</text>
</comment>
<protein>
    <recommendedName>
        <fullName evidence="1">Xaa-Pro dipeptidase</fullName>
        <shortName evidence="1">X-Pro dipeptidase</shortName>
        <ecNumber evidence="1">3.4.13.9</ecNumber>
    </recommendedName>
    <alternativeName>
        <fullName evidence="1">Imidodipeptidase</fullName>
    </alternativeName>
    <alternativeName>
        <fullName evidence="1">Proline dipeptidase</fullName>
        <shortName evidence="1">Prolidase</shortName>
    </alternativeName>
</protein>
<proteinExistence type="inferred from homology"/>
<gene>
    <name evidence="1" type="primary">pepQ</name>
    <name type="ordered locus">YPDSF_3385</name>
</gene>